<organism>
    <name type="scientific">Yersinia pseudotuberculosis serotype IB (strain PB1/+)</name>
    <dbReference type="NCBI Taxonomy" id="502801"/>
    <lineage>
        <taxon>Bacteria</taxon>
        <taxon>Pseudomonadati</taxon>
        <taxon>Pseudomonadota</taxon>
        <taxon>Gammaproteobacteria</taxon>
        <taxon>Enterobacterales</taxon>
        <taxon>Yersiniaceae</taxon>
        <taxon>Yersinia</taxon>
    </lineage>
</organism>
<comment type="function">
    <text evidence="1">Bidirectionally degrades single-stranded DNA into large acid-insoluble oligonucleotides, which are then degraded further into small acid-soluble oligonucleotides.</text>
</comment>
<comment type="catalytic activity">
    <reaction evidence="1">
        <text>Exonucleolytic cleavage in either 5'- to 3'- or 3'- to 5'-direction to yield nucleoside 5'-phosphates.</text>
        <dbReference type="EC" id="3.1.11.6"/>
    </reaction>
</comment>
<comment type="subunit">
    <text evidence="1">Heterooligomer composed of large and small subunits.</text>
</comment>
<comment type="subcellular location">
    <subcellularLocation>
        <location evidence="1">Cytoplasm</location>
    </subcellularLocation>
</comment>
<comment type="similarity">
    <text evidence="1">Belongs to the XseA family.</text>
</comment>
<accession>B2K9P2</accession>
<proteinExistence type="inferred from homology"/>
<sequence>MSQSSASSIFTVSRLNQTVRELLEREMGQIWLTAEISNFSQPASGHWYFTLKDDRAQVRCAMFRNSNRRTTFRPQNGQQVLVRASITLYEPRGDYQLIAESMQPAGDGLLQQQFEQLKQQLAAEGLFDQSHKQPLPSPAKQVGVITSASGAALHDVLHVLQRRDPSLPVIIYPTSVQGVDAPLQIVRAIQLANLRAECDVLIVGRGGGSLEDLWSFNDERVARAIFNSHIPIVSAVGHETDVTIADFVADLRAPTPSAAAELVSRNQIELVRQIQGQQQRMEMAMDYYLAQRNQQFTRLEHRLQQQHPHLRLARQQTLLLKLQRRLEESAQTQIRLLSKRTERLQQRLQQVQPQGQIHRYNQRVQQQEYRLRQAVERQLNGYRQRFGIACSQLEAVSPLATLARGYSVTQTPAGALLKTTKQVQAGDKLTTRLQDGWVESEITQVTVAKKSRQKKVVTQ</sequence>
<dbReference type="EC" id="3.1.11.6" evidence="1"/>
<dbReference type="EMBL" id="CP001048">
    <property type="protein sequence ID" value="ACC89899.1"/>
    <property type="molecule type" value="Genomic_DNA"/>
</dbReference>
<dbReference type="RefSeq" id="WP_011192797.1">
    <property type="nucleotide sequence ID" value="NZ_CP009780.1"/>
</dbReference>
<dbReference type="SMR" id="B2K9P2"/>
<dbReference type="KEGG" id="ypb:YPTS_2942"/>
<dbReference type="PATRIC" id="fig|502801.10.peg.2372"/>
<dbReference type="GO" id="GO:0005737">
    <property type="term" value="C:cytoplasm"/>
    <property type="evidence" value="ECO:0007669"/>
    <property type="project" value="UniProtKB-SubCell"/>
</dbReference>
<dbReference type="GO" id="GO:0009318">
    <property type="term" value="C:exodeoxyribonuclease VII complex"/>
    <property type="evidence" value="ECO:0007669"/>
    <property type="project" value="InterPro"/>
</dbReference>
<dbReference type="GO" id="GO:0008855">
    <property type="term" value="F:exodeoxyribonuclease VII activity"/>
    <property type="evidence" value="ECO:0007669"/>
    <property type="project" value="UniProtKB-UniRule"/>
</dbReference>
<dbReference type="GO" id="GO:0003676">
    <property type="term" value="F:nucleic acid binding"/>
    <property type="evidence" value="ECO:0007669"/>
    <property type="project" value="InterPro"/>
</dbReference>
<dbReference type="GO" id="GO:0006308">
    <property type="term" value="P:DNA catabolic process"/>
    <property type="evidence" value="ECO:0007669"/>
    <property type="project" value="UniProtKB-UniRule"/>
</dbReference>
<dbReference type="CDD" id="cd04489">
    <property type="entry name" value="ExoVII_LU_OBF"/>
    <property type="match status" value="1"/>
</dbReference>
<dbReference type="HAMAP" id="MF_00378">
    <property type="entry name" value="Exonuc_7_L"/>
    <property type="match status" value="1"/>
</dbReference>
<dbReference type="InterPro" id="IPR003753">
    <property type="entry name" value="Exonuc_VII_L"/>
</dbReference>
<dbReference type="InterPro" id="IPR020579">
    <property type="entry name" value="Exonuc_VII_lsu_C"/>
</dbReference>
<dbReference type="InterPro" id="IPR025824">
    <property type="entry name" value="OB-fold_nuc-bd_dom"/>
</dbReference>
<dbReference type="NCBIfam" id="TIGR00237">
    <property type="entry name" value="xseA"/>
    <property type="match status" value="1"/>
</dbReference>
<dbReference type="PANTHER" id="PTHR30008">
    <property type="entry name" value="EXODEOXYRIBONUCLEASE 7 LARGE SUBUNIT"/>
    <property type="match status" value="1"/>
</dbReference>
<dbReference type="PANTHER" id="PTHR30008:SF0">
    <property type="entry name" value="EXODEOXYRIBONUCLEASE 7 LARGE SUBUNIT"/>
    <property type="match status" value="1"/>
</dbReference>
<dbReference type="Pfam" id="PF02601">
    <property type="entry name" value="Exonuc_VII_L"/>
    <property type="match status" value="1"/>
</dbReference>
<dbReference type="Pfam" id="PF13742">
    <property type="entry name" value="tRNA_anti_2"/>
    <property type="match status" value="1"/>
</dbReference>
<reference key="1">
    <citation type="submission" date="2008-04" db="EMBL/GenBank/DDBJ databases">
        <title>Complete sequence of Yersinia pseudotuberculosis PB1/+.</title>
        <authorList>
            <person name="Copeland A."/>
            <person name="Lucas S."/>
            <person name="Lapidus A."/>
            <person name="Glavina del Rio T."/>
            <person name="Dalin E."/>
            <person name="Tice H."/>
            <person name="Bruce D."/>
            <person name="Goodwin L."/>
            <person name="Pitluck S."/>
            <person name="Munk A.C."/>
            <person name="Brettin T."/>
            <person name="Detter J.C."/>
            <person name="Han C."/>
            <person name="Tapia R."/>
            <person name="Schmutz J."/>
            <person name="Larimer F."/>
            <person name="Land M."/>
            <person name="Hauser L."/>
            <person name="Challacombe J.F."/>
            <person name="Green L."/>
            <person name="Lindler L.E."/>
            <person name="Nikolich M.P."/>
            <person name="Richardson P."/>
        </authorList>
    </citation>
    <scope>NUCLEOTIDE SEQUENCE [LARGE SCALE GENOMIC DNA]</scope>
    <source>
        <strain>PB1/+</strain>
    </source>
</reference>
<name>EX7L_YERPB</name>
<gene>
    <name evidence="1" type="primary">xseA</name>
    <name type="ordered locus">YPTS_2942</name>
</gene>
<evidence type="ECO:0000255" key="1">
    <source>
        <dbReference type="HAMAP-Rule" id="MF_00378"/>
    </source>
</evidence>
<keyword id="KW-0963">Cytoplasm</keyword>
<keyword id="KW-0269">Exonuclease</keyword>
<keyword id="KW-0378">Hydrolase</keyword>
<keyword id="KW-0540">Nuclease</keyword>
<protein>
    <recommendedName>
        <fullName evidence="1">Exodeoxyribonuclease 7 large subunit</fullName>
        <ecNumber evidence="1">3.1.11.6</ecNumber>
    </recommendedName>
    <alternativeName>
        <fullName evidence="1">Exodeoxyribonuclease VII large subunit</fullName>
        <shortName evidence="1">Exonuclease VII large subunit</shortName>
    </alternativeName>
</protein>
<feature type="chain" id="PRO_1000122104" description="Exodeoxyribonuclease 7 large subunit">
    <location>
        <begin position="1"/>
        <end position="459"/>
    </location>
</feature>